<organism>
    <name type="scientific">Clostridium perfringens (strain 13 / Type A)</name>
    <dbReference type="NCBI Taxonomy" id="195102"/>
    <lineage>
        <taxon>Bacteria</taxon>
        <taxon>Bacillati</taxon>
        <taxon>Bacillota</taxon>
        <taxon>Clostridia</taxon>
        <taxon>Eubacteriales</taxon>
        <taxon>Clostridiaceae</taxon>
        <taxon>Clostridium</taxon>
    </lineage>
</organism>
<proteinExistence type="evidence at protein level"/>
<keyword id="KW-0106">Calcium</keyword>
<keyword id="KW-0903">Direct protein sequencing</keyword>
<keyword id="KW-0378">Hydrolase</keyword>
<keyword id="KW-0479">Metal-binding</keyword>
<keyword id="KW-0482">Metalloprotease</keyword>
<keyword id="KW-0645">Protease</keyword>
<keyword id="KW-1185">Reference proteome</keyword>
<keyword id="KW-0677">Repeat</keyword>
<keyword id="KW-0964">Secreted</keyword>
<keyword id="KW-0732">Signal</keyword>
<keyword id="KW-0843">Virulence</keyword>
<keyword id="KW-0862">Zinc</keyword>
<keyword id="KW-0865">Zymogen</keyword>
<name>COLA_CLOPE</name>
<feature type="signal peptide" evidence="3">
    <location>
        <begin position="1"/>
        <end position="39"/>
    </location>
</feature>
<feature type="propeptide" id="PRO_0000028674" evidence="9">
    <location>
        <begin position="40"/>
        <end position="86"/>
    </location>
</feature>
<feature type="chain" id="PRO_0000028675" description="Collagenase ColA">
    <location>
        <begin position="87"/>
        <end position="1104"/>
    </location>
</feature>
<feature type="domain" description="PKD" evidence="4">
    <location>
        <begin position="774"/>
        <end position="862"/>
    </location>
</feature>
<feature type="region of interest" description="S1 metalloprotease domain" evidence="10">
    <location>
        <begin position="87"/>
        <end position="761"/>
    </location>
</feature>
<feature type="region of interest" description="Activator domain" evidence="1">
    <location>
        <begin position="93"/>
        <end position="367"/>
    </location>
</feature>
<feature type="region of interest" description="Catalytic subdomain" evidence="1">
    <location>
        <begin position="377"/>
        <end position="646"/>
    </location>
</feature>
<feature type="region of interest" description="Helper subdomain" evidence="1">
    <location>
        <begin position="654"/>
        <end position="767"/>
    </location>
</feature>
<feature type="region of interest" description="S2 domain" evidence="10">
    <location>
        <begin position="762"/>
        <end position="860"/>
    </location>
</feature>
<feature type="region of interest" description="S3a collagen-binding domain" evidence="10">
    <location>
        <begin position="865"/>
        <end position="979"/>
    </location>
</feature>
<feature type="region of interest" description="S3b collagen-binding domain" evidence="10">
    <location>
        <begin position="992"/>
        <end position="1104"/>
    </location>
</feature>
<feature type="active site" evidence="5">
    <location>
        <position position="503"/>
    </location>
</feature>
<feature type="binding site" evidence="1">
    <location>
        <position position="477"/>
    </location>
    <ligand>
        <name>Ca(2+)</name>
        <dbReference type="ChEBI" id="CHEBI:29108"/>
        <label>1</label>
    </ligand>
</feature>
<feature type="binding site" evidence="2 5">
    <location>
        <position position="502"/>
    </location>
    <ligand>
        <name>Zn(2+)</name>
        <dbReference type="ChEBI" id="CHEBI:29105"/>
        <note>catalytic</note>
    </ligand>
</feature>
<feature type="binding site" evidence="2 5">
    <location>
        <position position="506"/>
    </location>
    <ligand>
        <name>Zn(2+)</name>
        <dbReference type="ChEBI" id="CHEBI:29105"/>
        <note>catalytic</note>
    </ligand>
</feature>
<feature type="binding site" evidence="1">
    <location>
        <position position="510"/>
    </location>
    <ligand>
        <name>Ca(2+)</name>
        <dbReference type="ChEBI" id="CHEBI:29108"/>
        <label>1</label>
    </ligand>
</feature>
<feature type="binding site" evidence="1">
    <location>
        <position position="514"/>
    </location>
    <ligand>
        <name>Ca(2+)</name>
        <dbReference type="ChEBI" id="CHEBI:29108"/>
        <label>1</label>
    </ligand>
</feature>
<feature type="binding site" evidence="1">
    <location>
        <position position="516"/>
    </location>
    <ligand>
        <name>Ca(2+)</name>
        <dbReference type="ChEBI" id="CHEBI:29108"/>
        <label>1</label>
    </ligand>
</feature>
<feature type="binding site" evidence="2">
    <location>
        <position position="534"/>
    </location>
    <ligand>
        <name>Zn(2+)</name>
        <dbReference type="ChEBI" id="CHEBI:29105"/>
        <note>catalytic</note>
    </ligand>
</feature>
<feature type="binding site" evidence="2">
    <location>
        <position position="772"/>
    </location>
    <ligand>
        <name>Ca(2+)</name>
        <dbReference type="ChEBI" id="CHEBI:29108"/>
        <label>2</label>
    </ligand>
</feature>
<feature type="binding site" evidence="2">
    <location>
        <position position="773"/>
    </location>
    <ligand>
        <name>Ca(2+)</name>
        <dbReference type="ChEBI" id="CHEBI:29108"/>
        <label>2</label>
    </ligand>
</feature>
<feature type="binding site" evidence="2">
    <location>
        <position position="800"/>
    </location>
    <ligand>
        <name>Ca(2+)</name>
        <dbReference type="ChEBI" id="CHEBI:29108"/>
        <label>2</label>
    </ligand>
</feature>
<feature type="binding site" evidence="2">
    <location>
        <position position="802"/>
    </location>
    <ligand>
        <name>Ca(2+)</name>
        <dbReference type="ChEBI" id="CHEBI:29108"/>
        <label>2</label>
    </ligand>
</feature>
<feature type="binding site" evidence="2">
    <location>
        <position position="841"/>
    </location>
    <ligand>
        <name>Ca(2+)</name>
        <dbReference type="ChEBI" id="CHEBI:29108"/>
        <label>2</label>
    </ligand>
</feature>
<feature type="binding site" evidence="2">
    <location>
        <position position="866"/>
    </location>
    <ligand>
        <name>Ca(2+)</name>
        <dbReference type="ChEBI" id="CHEBI:29108"/>
        <label>3</label>
    </ligand>
</feature>
<feature type="binding site" evidence="2">
    <location>
        <position position="868"/>
    </location>
    <ligand>
        <name>Ca(2+)</name>
        <dbReference type="ChEBI" id="CHEBI:29108"/>
        <label>3</label>
    </ligand>
</feature>
<feature type="binding site" evidence="2">
    <location>
        <position position="868"/>
    </location>
    <ligand>
        <name>Ca(2+)</name>
        <dbReference type="ChEBI" id="CHEBI:29108"/>
        <label>4</label>
    </ligand>
</feature>
<feature type="binding site" evidence="2">
    <location>
        <position position="870"/>
    </location>
    <ligand>
        <name>Ca(2+)</name>
        <dbReference type="ChEBI" id="CHEBI:29108"/>
        <label>4</label>
    </ligand>
</feature>
<feature type="binding site" evidence="2">
    <location>
        <position position="894"/>
    </location>
    <ligand>
        <name>Ca(2+)</name>
        <dbReference type="ChEBI" id="CHEBI:29108"/>
        <label>3</label>
    </ligand>
</feature>
<feature type="binding site" evidence="2">
    <location>
        <position position="894"/>
    </location>
    <ligand>
        <name>Ca(2+)</name>
        <dbReference type="ChEBI" id="CHEBI:29108"/>
        <label>4</label>
    </ligand>
</feature>
<feature type="binding site" evidence="2">
    <location>
        <position position="897"/>
    </location>
    <ligand>
        <name>Ca(2+)</name>
        <dbReference type="ChEBI" id="CHEBI:29108"/>
        <label>3</label>
    </ligand>
</feature>
<feature type="binding site" evidence="2">
    <location>
        <position position="897"/>
    </location>
    <ligand>
        <name>Ca(2+)</name>
        <dbReference type="ChEBI" id="CHEBI:29108"/>
        <label>4</label>
    </ligand>
</feature>
<feature type="binding site" evidence="2">
    <location>
        <position position="993"/>
    </location>
    <ligand>
        <name>Ca(2+)</name>
        <dbReference type="ChEBI" id="CHEBI:29108"/>
        <label>5</label>
    </ligand>
</feature>
<feature type="binding site" evidence="2">
    <location>
        <position position="995"/>
    </location>
    <ligand>
        <name>Ca(2+)</name>
        <dbReference type="ChEBI" id="CHEBI:29108"/>
        <label>5</label>
    </ligand>
</feature>
<feature type="binding site" evidence="2">
    <location>
        <position position="995"/>
    </location>
    <ligand>
        <name>Ca(2+)</name>
        <dbReference type="ChEBI" id="CHEBI:29108"/>
        <label>6</label>
    </ligand>
</feature>
<feature type="binding site" evidence="2">
    <location>
        <position position="997"/>
    </location>
    <ligand>
        <name>Ca(2+)</name>
        <dbReference type="ChEBI" id="CHEBI:29108"/>
        <label>6</label>
    </ligand>
</feature>
<feature type="binding site" evidence="2">
    <location>
        <position position="1016"/>
    </location>
    <ligand>
        <name>Ca(2+)</name>
        <dbReference type="ChEBI" id="CHEBI:29108"/>
        <label>5</label>
    </ligand>
</feature>
<feature type="binding site" evidence="2">
    <location>
        <position position="1020"/>
    </location>
    <ligand>
        <name>Ca(2+)</name>
        <dbReference type="ChEBI" id="CHEBI:29108"/>
        <label>5</label>
    </ligand>
</feature>
<feature type="binding site" evidence="2">
    <location>
        <position position="1020"/>
    </location>
    <ligand>
        <name>Ca(2+)</name>
        <dbReference type="ChEBI" id="CHEBI:29108"/>
        <label>6</label>
    </ligand>
</feature>
<feature type="binding site" evidence="2">
    <location>
        <position position="1022"/>
    </location>
    <ligand>
        <name>Ca(2+)</name>
        <dbReference type="ChEBI" id="CHEBI:29108"/>
        <label>6</label>
    </ligand>
</feature>
<feature type="binding site" evidence="2">
    <location>
        <position position="1023"/>
    </location>
    <ligand>
        <name>Ca(2+)</name>
        <dbReference type="ChEBI" id="CHEBI:29108"/>
        <label>5</label>
    </ligand>
</feature>
<feature type="binding site" evidence="2">
    <location>
        <position position="1023"/>
    </location>
    <ligand>
        <name>Ca(2+)</name>
        <dbReference type="ChEBI" id="CHEBI:29108"/>
        <label>6</label>
    </ligand>
</feature>
<feature type="sequence conflict" description="In Ref. 1; BAA02941." evidence="8" ref="1">
    <original>L</original>
    <variation>F</variation>
    <location>
        <position position="38"/>
    </location>
</feature>
<feature type="sequence conflict" description="In Ref. 1; BAA02941." evidence="8" ref="1">
    <original>I</original>
    <variation>M</variation>
    <location>
        <position position="722"/>
    </location>
</feature>
<feature type="sequence conflict" description="In Ref. 1; BAA02941." evidence="8" ref="1">
    <original>G</original>
    <variation>E</variation>
    <location>
        <position position="748"/>
    </location>
</feature>
<feature type="sequence conflict" description="In Ref. 1; BAA02941." evidence="8" ref="1">
    <original>V</original>
    <variation>E</variation>
    <location>
        <position position="945"/>
    </location>
</feature>
<feature type="sequence conflict" description="In Ref. 1; BAA02941." evidence="8" ref="1">
    <original>T</original>
    <variation>A</variation>
    <location>
        <position position="970"/>
    </location>
</feature>
<feature type="sequence conflict" description="In Ref. 1; BAA02941." evidence="8" ref="1">
    <original>A</original>
    <variation>E</variation>
    <location>
        <position position="987"/>
    </location>
</feature>
<feature type="sequence conflict" description="In Ref. 1; BAA02941 and 3; BAA08848." evidence="8" ref="1 3">
    <original>I</original>
    <variation>T</variation>
    <location>
        <position position="1098"/>
    </location>
</feature>
<evidence type="ECO:0000250" key="1">
    <source>
        <dbReference type="UniProtKB" id="Q899Y1"/>
    </source>
</evidence>
<evidence type="ECO:0000250" key="2">
    <source>
        <dbReference type="UniProtKB" id="Q9X721"/>
    </source>
</evidence>
<evidence type="ECO:0000255" key="3"/>
<evidence type="ECO:0000255" key="4">
    <source>
        <dbReference type="PROSITE-ProRule" id="PRU00151"/>
    </source>
</evidence>
<evidence type="ECO:0000255" key="5">
    <source>
        <dbReference type="PROSITE-ProRule" id="PRU10095"/>
    </source>
</evidence>
<evidence type="ECO:0000269" key="6">
    <source>
    </source>
</evidence>
<evidence type="ECO:0000303" key="7">
    <source>
    </source>
</evidence>
<evidence type="ECO:0000305" key="8"/>
<evidence type="ECO:0000305" key="9">
    <source>
    </source>
</evidence>
<evidence type="ECO:0000305" key="10">
    <source>
    </source>
</evidence>
<accession>P43153</accession>
<reference key="1">
    <citation type="journal article" date="1994" name="J. Bacteriol.">
        <title>Purification and characterization of Clostridium perfringens 120-kilodalton collagenase and nucleotide sequence of the corresponding gene.</title>
        <authorList>
            <person name="Matsushita O."/>
            <person name="Yoshihara K."/>
            <person name="Katayama S."/>
            <person name="Minami J."/>
            <person name="Okabe A."/>
        </authorList>
    </citation>
    <scope>NUCLEOTIDE SEQUENCE [GENOMIC DNA]</scope>
    <scope>PROTEIN SEQUENCE OF 87-113</scope>
    <scope>SUBCELLULAR LOCATION</scope>
    <source>
        <strain>ATCC 3628 / NCIMB 10662 / Type C</strain>
    </source>
</reference>
<reference key="2">
    <citation type="journal article" date="2002" name="Proc. Natl. Acad. Sci. U.S.A.">
        <title>Complete genome sequence of Clostridium perfringens, an anaerobic flesh-eater.</title>
        <authorList>
            <person name="Shimizu T."/>
            <person name="Ohtani K."/>
            <person name="Hirakawa H."/>
            <person name="Ohshima K."/>
            <person name="Yamashita A."/>
            <person name="Shiba T."/>
            <person name="Ogasawara N."/>
            <person name="Hattori M."/>
            <person name="Kuhara S."/>
            <person name="Hayashi H."/>
        </authorList>
    </citation>
    <scope>NUCLEOTIDE SEQUENCE [LARGE SCALE GENOMIC DNA]</scope>
    <source>
        <strain>13 / Type A</strain>
    </source>
</reference>
<reference key="3">
    <citation type="submission" date="1995-04" db="EMBL/GenBank/DDBJ databases">
        <authorList>
            <person name="Matsushita O."/>
        </authorList>
    </citation>
    <scope>NUCLEOTIDE SEQUENCE [GENOMIC DNA] OF 1073-1104</scope>
    <source>
        <strain>ATCC 3628 / NCIMB 10662 / Type C</strain>
    </source>
</reference>
<reference key="4">
    <citation type="journal article" date="1999" name="J. Bacteriol.">
        <title>Gene duplication and multiplicity of collagenases in Clostridium histolyticum.</title>
        <authorList>
            <person name="Matsushita O."/>
            <person name="Jung C.-M."/>
            <person name="Katayama S."/>
            <person name="Minami J."/>
            <person name="Takahashi Y."/>
            <person name="Okabe A."/>
        </authorList>
    </citation>
    <scope>DISCUSSION OF SEQUENCE</scope>
    <scope>DOMAIN</scope>
</reference>
<comment type="function">
    <text evidence="1">Clostridial collagenases are among the most efficient degraders of eukaryotic collagen known; saprophytes use collagen as a carbon source while pathogens additionally digest collagen to aid in host colonization. Has both tripeptidylcarboxypeptidase on Gly-X-Y and endopeptidase activities; the endopeptidase cuts within the triple helix region of collagen while tripeptidylcarboxypeptidase successively digests the exposed ends, thus clostridial collagenases can digest large sections of collagen (By similarity).</text>
</comment>
<comment type="catalytic activity">
    <reaction evidence="1">
        <text>Digestion of native collagen in the triple helical region at Xaa-|-Gly bonds. With synthetic peptides, a preference is shown for Gly at P3 and P1', Pro and Ala at P2 and P2', and hydroxyproline, Ala or Arg at P3'.</text>
        <dbReference type="EC" id="3.4.24.3"/>
    </reaction>
</comment>
<comment type="cofactor">
    <cofactor evidence="1">
        <name>Ca(2+)</name>
        <dbReference type="ChEBI" id="CHEBI:29108"/>
    </cofactor>
    <text evidence="1 8">Binds about 6 Ca(2+) per subunit (Probable). The metallopeptidase and PKD domains bind 1 Ca(2+), while CDB binds 2 (Probable).</text>
</comment>
<comment type="cofactor">
    <cofactor evidence="1">
        <name>Zn(2+)</name>
        <dbReference type="ChEBI" id="CHEBI:29105"/>
    </cofactor>
    <text evidence="1">Binds 1 zinc ion.</text>
</comment>
<comment type="subcellular location">
    <subcellularLocation>
        <location evidence="6">Secreted</location>
    </subcellularLocation>
</comment>
<comment type="domain">
    <text evidence="1 10">The mature protein has 4 domains; a metalloprotease domain (S1, approximately residues 87-761), S2 (762-860, equivalent to PKD), and 2 collagen-binding domains S3a (865-979) and S3b (992-1104) (PubMed:9922257). The metalloprotease S1 domain is composed of 3 subdomains which together resemble a saddle; an activator domain (residues 93-367), the catalytic peptidase subdomain (377-646) and a helper subdomain (654-767) (By similarity).</text>
</comment>
<comment type="miscellaneous">
    <text evidence="8">Clostridial collagenases enable the bacteria to infiltrate and colonize host tissue, and contribute to gas gangrene (myonecrosis) pathogenesis.</text>
</comment>
<comment type="similarity">
    <text evidence="8">Belongs to the peptidase M9B family. Collagenase subfamily.</text>
</comment>
<protein>
    <recommendedName>
        <fullName evidence="7">Collagenase ColA</fullName>
        <ecNumber>3.4.24.3</ecNumber>
    </recommendedName>
    <alternativeName>
        <fullName>120 kDa collagenase</fullName>
    </alternativeName>
    <alternativeName>
        <fullName>Microbial collagenase</fullName>
    </alternativeName>
</protein>
<sequence length="1104" mass="125936">MKKNLKRGELTKLKLVERWSATFTLAAFILFNSSFKVLAADKKVENSNNGQITREINADQISKTELNNEVATDNNRPLGPSIAPSRARNNKIYTFDELNRMNYSDLVELIKTISYENVPDLFNFNDGSYTFFSNRDRVQAIIYGLEDSGRTYTADDDKGIPTLVEFLRAGYYLGFYNKQLSYLNTPQLKNECLPAMKAIQYNSNFRLGTKAQDGVVEALGRLIGNASADPEVINNCIYVLSDFKDNIDKYGSNYSKGNAVFNLMKGIDYYTNSVIYNTKGYDAKNTEFYNRIDPYMERLESLCTIGDKLNNDNAWLVNNALYYTGRMGKFREDPSISQRALERAMKEYPYLSYQYIEAANDLDLNFGGKNSSGNDIDFNKIKADAREKYLPKTYTFDDGKFVVKAGDKVTEEKIKRLYWASKEVKAQFMRVVQNDKALEEGNPDDILTVVIYNSPEEYKLNRIINGFSTDNGGIYIENIGTFFTYERTPEESIYTLEELFRHEFTHYLQGRYVVPGMWGQGEFYQEGVLTWYEEGTAEFFAGSTRTDGIKPRKSVTQGLAYDRNNRMSLYGVLHAKYGSWDFYNYGFALSNYMYNNNMGMFNKMTNYIKNNDVSGYKDYIASMSSDYGLNDKYQDYMDSLLNNIDNLDVPLVSDEYVNGHEAKDINEITNDIKEVSNIKDLSSNVEKSQFFTTYDMRGTYVGGRSQGEENDWKDMNSKLNDILKELSKKSWNGYKTVTAYFVNHKVDGNGNYVYDVVFHGMNTDTNTDVHVNKEPKAVIKSDSSVIVEEEINFDGTESKDEDGEIKAYEWDFGDGEKSNEAKATHKYNKTGEYEVKLTVTDNNGGINTESKKIKVVEDKPVEVINESEPNNDFEKANQIAKSNMLVKGTLSEEDYSDKYYFDVAKKGNVKITLNNLNSVGITWTLYKEGDLNNYVLYATGNDGTVLKGEKTLEPGRYYLSVYTYDNQSGTYTVNVKGNLKNEVKETAKDAIKEVENNNDFDKAMKVDSNSKIVGTLSNDDLKDIYSIDIQNPSDLNIVVENLDNIKMNWLLYSADDLSNYVDYANADGNKLSNTCKLNPGKYYLCVYQFENSGTGNYIVNLQNK</sequence>
<dbReference type="EC" id="3.4.24.3"/>
<dbReference type="EMBL" id="D13791">
    <property type="protein sequence ID" value="BAA02941.1"/>
    <property type="molecule type" value="Genomic_DNA"/>
</dbReference>
<dbReference type="EMBL" id="BA000016">
    <property type="protein sequence ID" value="BAB79879.1"/>
    <property type="molecule type" value="Genomic_DNA"/>
</dbReference>
<dbReference type="EMBL" id="D50309">
    <property type="protein sequence ID" value="BAA08848.1"/>
    <property type="molecule type" value="Genomic_DNA"/>
</dbReference>
<dbReference type="PIR" id="A36866">
    <property type="entry name" value="A36866"/>
</dbReference>
<dbReference type="RefSeq" id="WP_011009653.1">
    <property type="nucleotide sequence ID" value="NC_003366.1"/>
</dbReference>
<dbReference type="SMR" id="P43153"/>
<dbReference type="STRING" id="195102.gene:10489417"/>
<dbReference type="BindingDB" id="P43153"/>
<dbReference type="ChEMBL" id="CHEMBL2802"/>
<dbReference type="MEROPS" id="M09.005"/>
<dbReference type="KEGG" id="cpe:CPE0173"/>
<dbReference type="HOGENOM" id="CLU_012279_0_0_9"/>
<dbReference type="BRENDA" id="3.4.24.3">
    <property type="organism ID" value="1503"/>
</dbReference>
<dbReference type="Proteomes" id="UP000000818">
    <property type="component" value="Chromosome"/>
</dbReference>
<dbReference type="GO" id="GO:0005576">
    <property type="term" value="C:extracellular region"/>
    <property type="evidence" value="ECO:0007669"/>
    <property type="project" value="UniProtKB-SubCell"/>
</dbReference>
<dbReference type="GO" id="GO:0004222">
    <property type="term" value="F:metalloendopeptidase activity"/>
    <property type="evidence" value="ECO:0007669"/>
    <property type="project" value="UniProtKB-EC"/>
</dbReference>
<dbReference type="GO" id="GO:0008270">
    <property type="term" value="F:zinc ion binding"/>
    <property type="evidence" value="ECO:0007669"/>
    <property type="project" value="InterPro"/>
</dbReference>
<dbReference type="GO" id="GO:0006508">
    <property type="term" value="P:proteolysis"/>
    <property type="evidence" value="ECO:0007669"/>
    <property type="project" value="UniProtKB-KW"/>
</dbReference>
<dbReference type="CDD" id="cd00146">
    <property type="entry name" value="PKD"/>
    <property type="match status" value="1"/>
</dbReference>
<dbReference type="FunFam" id="3.40.30.160:FF:000001">
    <property type="entry name" value="Microbial collagenase"/>
    <property type="match status" value="1"/>
</dbReference>
<dbReference type="Gene3D" id="1.10.390.20">
    <property type="match status" value="1"/>
</dbReference>
<dbReference type="Gene3D" id="2.60.120.380">
    <property type="match status" value="2"/>
</dbReference>
<dbReference type="Gene3D" id="3.30.980.50">
    <property type="match status" value="1"/>
</dbReference>
<dbReference type="Gene3D" id="3.40.30.160">
    <property type="entry name" value="Collagenase ColT, N-terminal domain"/>
    <property type="match status" value="1"/>
</dbReference>
<dbReference type="Gene3D" id="2.60.40.10">
    <property type="entry name" value="Immunoglobulins"/>
    <property type="match status" value="1"/>
</dbReference>
<dbReference type="InterPro" id="IPR041379">
    <property type="entry name" value="ColG_subdomain"/>
</dbReference>
<dbReference type="InterPro" id="IPR013783">
    <property type="entry name" value="Ig-like_fold"/>
</dbReference>
<dbReference type="InterPro" id="IPR007280">
    <property type="entry name" value="Peptidase_C_arc/bac"/>
</dbReference>
<dbReference type="InterPro" id="IPR013661">
    <property type="entry name" value="Peptidase_M9_N_dom"/>
</dbReference>
<dbReference type="InterPro" id="IPR002169">
    <property type="entry name" value="Peptidase_M9A/M9B"/>
</dbReference>
<dbReference type="InterPro" id="IPR022409">
    <property type="entry name" value="PKD/Chitinase_dom"/>
</dbReference>
<dbReference type="InterPro" id="IPR000601">
    <property type="entry name" value="PKD_dom"/>
</dbReference>
<dbReference type="InterPro" id="IPR035986">
    <property type="entry name" value="PKD_dom_sf"/>
</dbReference>
<dbReference type="PANTHER" id="PTHR13062">
    <property type="entry name" value="COLLAGENASE"/>
    <property type="match status" value="1"/>
</dbReference>
<dbReference type="PANTHER" id="PTHR13062:SF9">
    <property type="entry name" value="MICROBIAL COLLAGENASE"/>
    <property type="match status" value="1"/>
</dbReference>
<dbReference type="Pfam" id="PF18496">
    <property type="entry name" value="ColG_sub"/>
    <property type="match status" value="1"/>
</dbReference>
<dbReference type="Pfam" id="PF01752">
    <property type="entry name" value="Peptidase_M9"/>
    <property type="match status" value="1"/>
</dbReference>
<dbReference type="Pfam" id="PF08453">
    <property type="entry name" value="Peptidase_M9_N"/>
    <property type="match status" value="1"/>
</dbReference>
<dbReference type="Pfam" id="PF18911">
    <property type="entry name" value="PKD_4"/>
    <property type="match status" value="1"/>
</dbReference>
<dbReference type="Pfam" id="PF04151">
    <property type="entry name" value="PPC"/>
    <property type="match status" value="2"/>
</dbReference>
<dbReference type="PRINTS" id="PR00931">
    <property type="entry name" value="MICOLLPTASE"/>
</dbReference>
<dbReference type="SMART" id="SM00089">
    <property type="entry name" value="PKD"/>
    <property type="match status" value="1"/>
</dbReference>
<dbReference type="SUPFAM" id="SSF89260">
    <property type="entry name" value="Collagen-binding domain"/>
    <property type="match status" value="2"/>
</dbReference>
<dbReference type="SUPFAM" id="SSF49299">
    <property type="entry name" value="PKD domain"/>
    <property type="match status" value="1"/>
</dbReference>
<dbReference type="PROSITE" id="PS50093">
    <property type="entry name" value="PKD"/>
    <property type="match status" value="1"/>
</dbReference>
<dbReference type="PROSITE" id="PS00142">
    <property type="entry name" value="ZINC_PROTEASE"/>
    <property type="match status" value="1"/>
</dbReference>
<gene>
    <name type="primary">colA</name>
    <name type="ordered locus">CPE0173</name>
</gene>